<feature type="signal peptide">
    <location>
        <begin position="1"/>
        <end position="19"/>
    </location>
</feature>
<feature type="chain" id="PRO_0000015219" description="Ig heavy chain V region 102">
    <location>
        <begin position="20"/>
        <end position="117"/>
    </location>
</feature>
<feature type="region of interest" description="Framework-1">
    <location>
        <begin position="20"/>
        <end position="49"/>
    </location>
</feature>
<feature type="region of interest" description="Complementarity-determining-1">
    <location>
        <begin position="50"/>
        <end position="54"/>
    </location>
</feature>
<feature type="region of interest" description="Framework-2">
    <location>
        <begin position="55"/>
        <end position="68"/>
    </location>
</feature>
<feature type="region of interest" description="Complementarity-determining-2">
    <location>
        <begin position="69"/>
        <end position="85"/>
    </location>
</feature>
<feature type="region of interest" description="Framework-3">
    <location>
        <begin position="86"/>
        <end position="117"/>
    </location>
</feature>
<feature type="disulfide bond" evidence="1">
    <location>
        <begin position="41"/>
        <end position="115"/>
    </location>
</feature>
<feature type="non-terminal residue">
    <location>
        <position position="117"/>
    </location>
</feature>
<feature type="strand" evidence="2">
    <location>
        <begin position="23"/>
        <end position="26"/>
    </location>
</feature>
<feature type="strand" evidence="2">
    <location>
        <begin position="33"/>
        <end position="37"/>
    </location>
</feature>
<feature type="strand" evidence="2">
    <location>
        <begin position="40"/>
        <end position="43"/>
    </location>
</feature>
<feature type="helix" evidence="2">
    <location>
        <begin position="48"/>
        <end position="50"/>
    </location>
</feature>
<feature type="strand" evidence="2">
    <location>
        <begin position="54"/>
        <end position="58"/>
    </location>
</feature>
<feature type="strand" evidence="2">
    <location>
        <begin position="64"/>
        <end position="70"/>
    </location>
</feature>
<feature type="turn" evidence="2">
    <location>
        <begin position="72"/>
        <end position="74"/>
    </location>
</feature>
<feature type="turn" evidence="3">
    <location>
        <begin position="81"/>
        <end position="86"/>
    </location>
</feature>
<feature type="strand" evidence="3">
    <location>
        <begin position="87"/>
        <end position="92"/>
    </location>
</feature>
<feature type="turn" evidence="2">
    <location>
        <begin position="93"/>
        <end position="96"/>
    </location>
</feature>
<feature type="strand" evidence="2">
    <location>
        <begin position="102"/>
        <end position="104"/>
    </location>
</feature>
<feature type="strand" evidence="2">
    <location>
        <begin position="107"/>
        <end position="109"/>
    </location>
</feature>
<feature type="strand" evidence="2">
    <location>
        <begin position="111"/>
        <end position="116"/>
    </location>
</feature>
<organism>
    <name type="scientific">Mus musculus</name>
    <name type="common">Mouse</name>
    <dbReference type="NCBI Taxonomy" id="10090"/>
    <lineage>
        <taxon>Eukaryota</taxon>
        <taxon>Metazoa</taxon>
        <taxon>Chordata</taxon>
        <taxon>Craniata</taxon>
        <taxon>Vertebrata</taxon>
        <taxon>Euteleostomi</taxon>
        <taxon>Mammalia</taxon>
        <taxon>Eutheria</taxon>
        <taxon>Euarchontoglires</taxon>
        <taxon>Glires</taxon>
        <taxon>Rodentia</taxon>
        <taxon>Myomorpha</taxon>
        <taxon>Muroidea</taxon>
        <taxon>Muridae</taxon>
        <taxon>Murinae</taxon>
        <taxon>Mus</taxon>
        <taxon>Mus</taxon>
    </lineage>
</organism>
<accession>P01750</accession>
<comment type="miscellaneous">
    <text>This germline gene belongs to a set of closely related genes that could encode V regions of NPb antibodies.</text>
</comment>
<reference key="1">
    <citation type="journal article" date="1981" name="Cell">
        <title>Heavy chain variable region contribution to the NPb family of antibodies: somatic mutation evident in a gamma 2a variable region.</title>
        <authorList>
            <person name="Bothwell A.L.M."/>
            <person name="Paskind M."/>
            <person name="Reth M."/>
            <person name="Imanishi-Kari T."/>
            <person name="Rajewsky K."/>
            <person name="Baltimore D."/>
        </authorList>
    </citation>
    <scope>NUCLEOTIDE SEQUENCE</scope>
    <source>
        <strain>C57BL/6J</strain>
    </source>
</reference>
<dbReference type="PIR" id="A02032">
    <property type="entry name" value="HVMS02"/>
</dbReference>
<dbReference type="PDB" id="1QFW">
    <property type="method" value="X-ray"/>
    <property type="resolution" value="3.50 A"/>
    <property type="chains" value="H=21-116"/>
</dbReference>
<dbReference type="PDB" id="1QNZ">
    <property type="method" value="NMR"/>
    <property type="chains" value="H=21-117"/>
</dbReference>
<dbReference type="PDBsum" id="1QFW"/>
<dbReference type="PDBsum" id="1QNZ"/>
<dbReference type="SMR" id="P01750"/>
<dbReference type="FunCoup" id="P01750">
    <property type="interactions" value="584"/>
</dbReference>
<dbReference type="CPTAC" id="non-CPTAC-3821"/>
<dbReference type="InParanoid" id="P01750"/>
<dbReference type="EvolutionaryTrace" id="P01750"/>
<dbReference type="Proteomes" id="UP000000589">
    <property type="component" value="Unplaced"/>
</dbReference>
<dbReference type="RNAct" id="P01750">
    <property type="molecule type" value="protein"/>
</dbReference>
<dbReference type="GO" id="GO:0005576">
    <property type="term" value="C:extracellular region"/>
    <property type="evidence" value="ECO:0007669"/>
    <property type="project" value="UniProtKB-ARBA"/>
</dbReference>
<dbReference type="GO" id="GO:0019814">
    <property type="term" value="C:immunoglobulin complex"/>
    <property type="evidence" value="ECO:0007669"/>
    <property type="project" value="UniProtKB-KW"/>
</dbReference>
<dbReference type="GO" id="GO:0003823">
    <property type="term" value="F:antigen binding"/>
    <property type="evidence" value="ECO:0000318"/>
    <property type="project" value="GO_Central"/>
</dbReference>
<dbReference type="GO" id="GO:0016064">
    <property type="term" value="P:immunoglobulin mediated immune response"/>
    <property type="evidence" value="ECO:0000318"/>
    <property type="project" value="GO_Central"/>
</dbReference>
<dbReference type="CDD" id="cd04981">
    <property type="entry name" value="IgV_H"/>
    <property type="match status" value="1"/>
</dbReference>
<dbReference type="FunFam" id="2.60.40.10:FF:001025">
    <property type="entry name" value="Immunoglobulin heavy variable V1-74"/>
    <property type="match status" value="1"/>
</dbReference>
<dbReference type="Gene3D" id="2.60.40.10">
    <property type="entry name" value="Immunoglobulins"/>
    <property type="match status" value="1"/>
</dbReference>
<dbReference type="InterPro" id="IPR007110">
    <property type="entry name" value="Ig-like_dom"/>
</dbReference>
<dbReference type="InterPro" id="IPR036179">
    <property type="entry name" value="Ig-like_dom_sf"/>
</dbReference>
<dbReference type="InterPro" id="IPR013783">
    <property type="entry name" value="Ig-like_fold"/>
</dbReference>
<dbReference type="InterPro" id="IPR013106">
    <property type="entry name" value="Ig_V-set"/>
</dbReference>
<dbReference type="InterPro" id="IPR050199">
    <property type="entry name" value="IgHV"/>
</dbReference>
<dbReference type="PANTHER" id="PTHR23266">
    <property type="entry name" value="IMMUNOGLOBULIN HEAVY CHAIN"/>
    <property type="match status" value="1"/>
</dbReference>
<dbReference type="Pfam" id="PF07686">
    <property type="entry name" value="V-set"/>
    <property type="match status" value="1"/>
</dbReference>
<dbReference type="SMART" id="SM00406">
    <property type="entry name" value="IGv"/>
    <property type="match status" value="1"/>
</dbReference>
<dbReference type="SUPFAM" id="SSF48726">
    <property type="entry name" value="Immunoglobulin"/>
    <property type="match status" value="1"/>
</dbReference>
<dbReference type="PROSITE" id="PS50835">
    <property type="entry name" value="IG_LIKE"/>
    <property type="match status" value="1"/>
</dbReference>
<keyword id="KW-0002">3D-structure</keyword>
<keyword id="KW-1064">Adaptive immunity</keyword>
<keyword id="KW-1015">Disulfide bond</keyword>
<keyword id="KW-0391">Immunity</keyword>
<keyword id="KW-1280">Immunoglobulin</keyword>
<keyword id="KW-1185">Reference proteome</keyword>
<keyword id="KW-0732">Signal</keyword>
<name>HVM06_MOUSE</name>
<sequence>MGWSCIILFLVATATGVHSHVQLQQPGAELVKPGASVKVSCKASGYTFTSYWMHWVKQRPGQGLEWIGRIHPSDSDTNYNQKFKGKATLTVDKSSSTAYMQLSSLTSEDSAVYYCAI</sequence>
<protein>
    <recommendedName>
        <fullName>Ig heavy chain V region 102</fullName>
    </recommendedName>
</protein>
<proteinExistence type="evidence at protein level"/>
<evidence type="ECO:0000255" key="1">
    <source>
        <dbReference type="PROSITE-ProRule" id="PRU00114"/>
    </source>
</evidence>
<evidence type="ECO:0007829" key="2">
    <source>
        <dbReference type="PDB" id="1QFW"/>
    </source>
</evidence>
<evidence type="ECO:0007829" key="3">
    <source>
        <dbReference type="PDB" id="1QNZ"/>
    </source>
</evidence>